<organism>
    <name type="scientific">Escherichia coli O6:H1 (strain CFT073 / ATCC 700928 / UPEC)</name>
    <dbReference type="NCBI Taxonomy" id="199310"/>
    <lineage>
        <taxon>Bacteria</taxon>
        <taxon>Pseudomonadati</taxon>
        <taxon>Pseudomonadota</taxon>
        <taxon>Gammaproteobacteria</taxon>
        <taxon>Enterobacterales</taxon>
        <taxon>Enterobacteriaceae</taxon>
        <taxon>Escherichia</taxon>
    </lineage>
</organism>
<accession>P0AFV5</accession>
<accession>O08016</accession>
<accession>P77685</accession>
<reference key="1">
    <citation type="journal article" date="2002" name="Proc. Natl. Acad. Sci. U.S.A.">
        <title>Extensive mosaic structure revealed by the complete genome sequence of uropathogenic Escherichia coli.</title>
        <authorList>
            <person name="Welch R.A."/>
            <person name="Burland V."/>
            <person name="Plunkett G. III"/>
            <person name="Redford P."/>
            <person name="Roesch P."/>
            <person name="Rasko D."/>
            <person name="Buckles E.L."/>
            <person name="Liou S.-R."/>
            <person name="Boutin A."/>
            <person name="Hackett J."/>
            <person name="Stroud D."/>
            <person name="Mayhew G.F."/>
            <person name="Rose D.J."/>
            <person name="Zhou S."/>
            <person name="Schwartz D.C."/>
            <person name="Perna N.T."/>
            <person name="Mobley H.L.T."/>
            <person name="Donnenberg M.S."/>
            <person name="Blattner F.R."/>
        </authorList>
    </citation>
    <scope>NUCLEOTIDE SEQUENCE [LARGE SCALE GENOMIC DNA]</scope>
    <source>
        <strain>CFT073 / ATCC 700928 / UPEC</strain>
    </source>
</reference>
<feature type="signal peptide" evidence="2">
    <location>
        <begin position="1"/>
        <end position="26"/>
    </location>
</feature>
<feature type="chain" id="PRO_0000045242" description="Murein DD-endopeptidase MepS/Murein LD-carboxypeptidase">
    <location>
        <begin position="27"/>
        <end position="188"/>
    </location>
</feature>
<feature type="domain" description="NlpC/P60" evidence="3">
    <location>
        <begin position="64"/>
        <end position="185"/>
    </location>
</feature>
<feature type="active site" description="Nucleophile" evidence="3">
    <location>
        <position position="94"/>
    </location>
</feature>
<feature type="active site" description="Proton acceptor" evidence="3">
    <location>
        <position position="145"/>
    </location>
</feature>
<feature type="active site" evidence="3">
    <location>
        <position position="157"/>
    </location>
</feature>
<feature type="lipid moiety-binding region" description="N-palmitoyl cysteine" evidence="2">
    <location>
        <position position="27"/>
    </location>
</feature>
<feature type="lipid moiety-binding region" description="S-diacylglycerol cysteine" evidence="2">
    <location>
        <position position="27"/>
    </location>
</feature>
<protein>
    <recommendedName>
        <fullName>Murein DD-endopeptidase MepS/Murein LD-carboxypeptidase</fullName>
        <ecNumber>3.4.-.-</ecNumber>
        <ecNumber>3.4.17.13</ecNumber>
    </recommendedName>
    <alternativeName>
        <fullName>Lipoprotein Spr</fullName>
    </alternativeName>
    <alternativeName>
        <fullName>Murein hydrolase MepS</fullName>
    </alternativeName>
</protein>
<keyword id="KW-0998">Cell outer membrane</keyword>
<keyword id="KW-0378">Hydrolase</keyword>
<keyword id="KW-0449">Lipoprotein</keyword>
<keyword id="KW-0472">Membrane</keyword>
<keyword id="KW-0564">Palmitate</keyword>
<keyword id="KW-0645">Protease</keyword>
<keyword id="KW-1185">Reference proteome</keyword>
<keyword id="KW-0732">Signal</keyword>
<keyword id="KW-0788">Thiol protease</keyword>
<gene>
    <name type="primary">mepS</name>
    <name type="synonym">spr</name>
    <name type="ordered locus">c2712</name>
</gene>
<comment type="function">
    <text evidence="1">A murein DD-endopeptidase with specificity for D-Ala-meso-diaminopimelic acid (mDAP) cross-links. Its role is probably to cleave D-Ala-mDAP cross-links to allow insertion of new glycans and thus cell wall expansion. Functionally redundant with MepM and MepH. Also has weak LD-carboxypeptidase activity on L-mDAP-D-Ala peptide bonds (By similarity).</text>
</comment>
<comment type="catalytic activity">
    <reaction>
        <text>N-acetyl-D-glucosaminyl-N-acetylmuramoyl-L-alanyl-meso-2,6-diaminoheptanedioyl-D-alanine + H2O = N-acetyl-D-glucosaminyl-N-acetylmuramoyl-L-alanyl-meso-2,6-diaminoheptanedioate + D-alanine</text>
        <dbReference type="Rhea" id="RHEA:48688"/>
        <dbReference type="ChEBI" id="CHEBI:15377"/>
        <dbReference type="ChEBI" id="CHEBI:57416"/>
        <dbReference type="ChEBI" id="CHEBI:233808"/>
        <dbReference type="ChEBI" id="CHEBI:233809"/>
        <dbReference type="EC" id="3.4.17.13"/>
    </reaction>
</comment>
<comment type="pathway">
    <text>Cell wall biogenesis; cell wall polysaccharide biosynthesis.</text>
</comment>
<comment type="subunit">
    <text evidence="1">Monomer.</text>
</comment>
<comment type="subcellular location">
    <subcellularLocation>
        <location evidence="4">Cell outer membrane</location>
        <topology evidence="2">Lipid-anchor</topology>
    </subcellularLocation>
</comment>
<comment type="similarity">
    <text evidence="3 4">Belongs to the peptidase C40 family.</text>
</comment>
<name>MEPS_ECOL6</name>
<dbReference type="EC" id="3.4.-.-"/>
<dbReference type="EC" id="3.4.17.13"/>
<dbReference type="EMBL" id="AE014075">
    <property type="protein sequence ID" value="AAN81166.1"/>
    <property type="molecule type" value="Genomic_DNA"/>
</dbReference>
<dbReference type="RefSeq" id="WP_000241011.1">
    <property type="nucleotide sequence ID" value="NZ_CP051263.1"/>
</dbReference>
<dbReference type="BMRB" id="P0AFV5"/>
<dbReference type="SMR" id="P0AFV5"/>
<dbReference type="STRING" id="199310.c2712"/>
<dbReference type="GeneID" id="93775006"/>
<dbReference type="KEGG" id="ecc:c2712"/>
<dbReference type="eggNOG" id="COG0791">
    <property type="taxonomic scope" value="Bacteria"/>
</dbReference>
<dbReference type="HOGENOM" id="CLU_016043_9_1_6"/>
<dbReference type="BioCyc" id="ECOL199310:C2712-MONOMER"/>
<dbReference type="UniPathway" id="UPA00963"/>
<dbReference type="Proteomes" id="UP000001410">
    <property type="component" value="Chromosome"/>
</dbReference>
<dbReference type="GO" id="GO:0009279">
    <property type="term" value="C:cell outer membrane"/>
    <property type="evidence" value="ECO:0007669"/>
    <property type="project" value="UniProtKB-SubCell"/>
</dbReference>
<dbReference type="GO" id="GO:0008234">
    <property type="term" value="F:cysteine-type peptidase activity"/>
    <property type="evidence" value="ECO:0007669"/>
    <property type="project" value="UniProtKB-KW"/>
</dbReference>
<dbReference type="GO" id="GO:0106415">
    <property type="term" value="F:muramoyltetrapeptide carboxypeptidase activity"/>
    <property type="evidence" value="ECO:0007669"/>
    <property type="project" value="UniProtKB-EC"/>
</dbReference>
<dbReference type="GO" id="GO:0045227">
    <property type="term" value="P:capsule polysaccharide biosynthetic process"/>
    <property type="evidence" value="ECO:0007669"/>
    <property type="project" value="UniProtKB-UniPathway"/>
</dbReference>
<dbReference type="GO" id="GO:0006508">
    <property type="term" value="P:proteolysis"/>
    <property type="evidence" value="ECO:0007669"/>
    <property type="project" value="UniProtKB-KW"/>
</dbReference>
<dbReference type="FunFam" id="3.90.1720.10:FF:000001">
    <property type="entry name" value="Bifunctional murein DD-endopeptidase/murein LD-carboxypeptidase"/>
    <property type="match status" value="1"/>
</dbReference>
<dbReference type="Gene3D" id="3.90.1720.10">
    <property type="entry name" value="endopeptidase domain like (from Nostoc punctiforme)"/>
    <property type="match status" value="1"/>
</dbReference>
<dbReference type="InterPro" id="IPR052062">
    <property type="entry name" value="Murein_DD/LD_carboxypeptidase"/>
</dbReference>
<dbReference type="InterPro" id="IPR000064">
    <property type="entry name" value="NLP_P60_dom"/>
</dbReference>
<dbReference type="InterPro" id="IPR038765">
    <property type="entry name" value="Papain-like_cys_pep_sf"/>
</dbReference>
<dbReference type="NCBIfam" id="NF008096">
    <property type="entry name" value="PRK10838.1"/>
    <property type="match status" value="1"/>
</dbReference>
<dbReference type="PANTHER" id="PTHR47360">
    <property type="entry name" value="MUREIN DD-ENDOPEPTIDASE MEPS/MUREIN LD-CARBOXYPEPTIDASE"/>
    <property type="match status" value="1"/>
</dbReference>
<dbReference type="PANTHER" id="PTHR47360:SF3">
    <property type="entry name" value="MUREIN DD-ENDOPEPTIDASE MEPS_MUREIN LD-CARBOXYPEPTIDASE"/>
    <property type="match status" value="1"/>
</dbReference>
<dbReference type="Pfam" id="PF00877">
    <property type="entry name" value="NLPC_P60"/>
    <property type="match status" value="1"/>
</dbReference>
<dbReference type="SUPFAM" id="SSF54001">
    <property type="entry name" value="Cysteine proteinases"/>
    <property type="match status" value="1"/>
</dbReference>
<dbReference type="PROSITE" id="PS51935">
    <property type="entry name" value="NLPC_P60"/>
    <property type="match status" value="1"/>
</dbReference>
<dbReference type="PROSITE" id="PS51257">
    <property type="entry name" value="PROKAR_LIPOPROTEIN"/>
    <property type="match status" value="1"/>
</dbReference>
<sequence length="188" mass="21040">MVKSQPILRYILRGIPAIAVAVLLSACSANNTAKNMHPETRAVGSETSSLQASQDEFENLVRNVDVKSRIMDQYADWKGVRYRLGGSTKKGIDCSGFVQRTFREQFGLELPRSTYEQQEMGKSVSRSNLRTGDLVLFRAGSTGRHVGIYIGNNQFVHASTSSGVIISSMNEPYWKKRYNEARRVLSRS</sequence>
<evidence type="ECO:0000250" key="1"/>
<evidence type="ECO:0000255" key="2">
    <source>
        <dbReference type="PROSITE-ProRule" id="PRU00303"/>
    </source>
</evidence>
<evidence type="ECO:0000255" key="3">
    <source>
        <dbReference type="PROSITE-ProRule" id="PRU01284"/>
    </source>
</evidence>
<evidence type="ECO:0000305" key="4"/>
<proteinExistence type="inferred from homology"/>